<comment type="subunit">
    <text evidence="1">Interacts with EPM2A.</text>
</comment>
<comment type="subcellular location">
    <subcellularLocation>
        <location evidence="1">Endoplasmic reticulum</location>
    </subcellularLocation>
</comment>
<accession>Q8VEH5</accession>
<accession>Q80TS4</accession>
<feature type="chain" id="PRO_0000086993" description="EPM2A-interacting protein 1">
    <location>
        <begin position="1"/>
        <end position="606"/>
    </location>
</feature>
<feature type="modified residue" description="Phosphoserine" evidence="2">
    <location>
        <position position="147"/>
    </location>
</feature>
<keyword id="KW-0256">Endoplasmic reticulum</keyword>
<keyword id="KW-0597">Phosphoprotein</keyword>
<keyword id="KW-1185">Reference proteome</keyword>
<protein>
    <recommendedName>
        <fullName>EPM2A-interacting protein 1</fullName>
    </recommendedName>
    <alternativeName>
        <fullName>Laforin-interacting protein</fullName>
    </alternativeName>
</protein>
<dbReference type="EMBL" id="AK030084">
    <property type="protein sequence ID" value="BAC26774.1"/>
    <property type="molecule type" value="mRNA"/>
</dbReference>
<dbReference type="EMBL" id="AK032284">
    <property type="protein sequence ID" value="BAC27793.1"/>
    <property type="molecule type" value="mRNA"/>
</dbReference>
<dbReference type="EMBL" id="BC018474">
    <property type="protein sequence ID" value="AAH18474.1"/>
    <property type="molecule type" value="mRNA"/>
</dbReference>
<dbReference type="EMBL" id="AK122366">
    <property type="protein sequence ID" value="BAC65648.1"/>
    <property type="molecule type" value="mRNA"/>
</dbReference>
<dbReference type="CCDS" id="CCDS40785.1"/>
<dbReference type="RefSeq" id="NP_780475.1">
    <property type="nucleotide sequence ID" value="NM_175266.4"/>
</dbReference>
<dbReference type="BioGRID" id="218916">
    <property type="interactions" value="11"/>
</dbReference>
<dbReference type="FunCoup" id="Q8VEH5">
    <property type="interactions" value="1972"/>
</dbReference>
<dbReference type="IntAct" id="Q8VEH5">
    <property type="interactions" value="2"/>
</dbReference>
<dbReference type="STRING" id="10090.ENSMUSP00000052904"/>
<dbReference type="iPTMnet" id="Q8VEH5"/>
<dbReference type="PhosphoSitePlus" id="Q8VEH5"/>
<dbReference type="jPOST" id="Q8VEH5"/>
<dbReference type="PaxDb" id="10090-ENSMUSP00000052904"/>
<dbReference type="PeptideAtlas" id="Q8VEH5"/>
<dbReference type="ProteomicsDB" id="275633"/>
<dbReference type="Pumba" id="Q8VEH5"/>
<dbReference type="Antibodypedia" id="28166">
    <property type="antibodies" value="404 antibodies from 27 providers"/>
</dbReference>
<dbReference type="DNASU" id="77781"/>
<dbReference type="Ensembl" id="ENSMUST00000060711.8">
    <property type="protein sequence ID" value="ENSMUSP00000052904.6"/>
    <property type="gene ID" value="ENSMUSG00000046785.9"/>
</dbReference>
<dbReference type="Ensembl" id="ENSMUST00000135807.2">
    <property type="protein sequence ID" value="ENSMUSP00000120245.2"/>
    <property type="gene ID" value="ENSMUSG00000046785.9"/>
</dbReference>
<dbReference type="GeneID" id="77781"/>
<dbReference type="KEGG" id="mmu:77781"/>
<dbReference type="UCSC" id="uc009rvr.1">
    <property type="organism name" value="mouse"/>
</dbReference>
<dbReference type="AGR" id="MGI:1925031"/>
<dbReference type="CTD" id="9852"/>
<dbReference type="MGI" id="MGI:1925031">
    <property type="gene designation" value="Epm2aip1"/>
</dbReference>
<dbReference type="VEuPathDB" id="HostDB:ENSMUSG00000046785"/>
<dbReference type="eggNOG" id="ENOG502QS6T">
    <property type="taxonomic scope" value="Eukaryota"/>
</dbReference>
<dbReference type="GeneTree" id="ENSGT00950000182812"/>
<dbReference type="HOGENOM" id="CLU_021316_5_1_1"/>
<dbReference type="InParanoid" id="Q8VEH5"/>
<dbReference type="OMA" id="HGERING"/>
<dbReference type="OrthoDB" id="1101576at2759"/>
<dbReference type="PhylomeDB" id="Q8VEH5"/>
<dbReference type="TreeFam" id="TF328297"/>
<dbReference type="BioGRID-ORCS" id="77781">
    <property type="hits" value="3 hits in 77 CRISPR screens"/>
</dbReference>
<dbReference type="ChiTaRS" id="Epm2aip1">
    <property type="organism name" value="mouse"/>
</dbReference>
<dbReference type="PRO" id="PR:Q8VEH5"/>
<dbReference type="Proteomes" id="UP000000589">
    <property type="component" value="Chromosome 9"/>
</dbReference>
<dbReference type="RNAct" id="Q8VEH5">
    <property type="molecule type" value="protein"/>
</dbReference>
<dbReference type="Bgee" id="ENSMUSG00000046785">
    <property type="expression patterns" value="Expressed in ventromedial nucleus of hypothalamus and 226 other cell types or tissues"/>
</dbReference>
<dbReference type="GO" id="GO:0005737">
    <property type="term" value="C:cytoplasm"/>
    <property type="evidence" value="ECO:0000314"/>
    <property type="project" value="MGI"/>
</dbReference>
<dbReference type="GO" id="GO:0098554">
    <property type="term" value="C:cytoplasmic side of endoplasmic reticulum membrane"/>
    <property type="evidence" value="ECO:0000314"/>
    <property type="project" value="MGI"/>
</dbReference>
<dbReference type="GO" id="GO:0005634">
    <property type="term" value="C:nucleus"/>
    <property type="evidence" value="ECO:0000314"/>
    <property type="project" value="MGI"/>
</dbReference>
<dbReference type="GO" id="GO:0042802">
    <property type="term" value="F:identical protein binding"/>
    <property type="evidence" value="ECO:0007669"/>
    <property type="project" value="Ensembl"/>
</dbReference>
<dbReference type="GO" id="GO:0005978">
    <property type="term" value="P:glycogen biosynthetic process"/>
    <property type="evidence" value="ECO:0000315"/>
    <property type="project" value="MGI"/>
</dbReference>
<dbReference type="GO" id="GO:0045725">
    <property type="term" value="P:positive regulation of glycogen biosynthetic process"/>
    <property type="evidence" value="ECO:0000315"/>
    <property type="project" value="MGI"/>
</dbReference>
<dbReference type="GO" id="GO:0032868">
    <property type="term" value="P:response to insulin"/>
    <property type="evidence" value="ECO:0000315"/>
    <property type="project" value="MGI"/>
</dbReference>
<dbReference type="InterPro" id="IPR040647">
    <property type="entry name" value="SPIN-DOC_Znf-C2H2"/>
</dbReference>
<dbReference type="PANTHER" id="PTHR45913">
    <property type="entry name" value="EPM2A-INTERACTING PROTEIN 1"/>
    <property type="match status" value="1"/>
</dbReference>
<dbReference type="PANTHER" id="PTHR45913:SF11">
    <property type="entry name" value="EPM2A-INTERACTING PROTEIN 1"/>
    <property type="match status" value="1"/>
</dbReference>
<dbReference type="Pfam" id="PF18658">
    <property type="entry name" value="zf-C2H2_12"/>
    <property type="match status" value="1"/>
</dbReference>
<reference key="1">
    <citation type="journal article" date="2005" name="Science">
        <title>The transcriptional landscape of the mammalian genome.</title>
        <authorList>
            <person name="Carninci P."/>
            <person name="Kasukawa T."/>
            <person name="Katayama S."/>
            <person name="Gough J."/>
            <person name="Frith M.C."/>
            <person name="Maeda N."/>
            <person name="Oyama R."/>
            <person name="Ravasi T."/>
            <person name="Lenhard B."/>
            <person name="Wells C."/>
            <person name="Kodzius R."/>
            <person name="Shimokawa K."/>
            <person name="Bajic V.B."/>
            <person name="Brenner S.E."/>
            <person name="Batalov S."/>
            <person name="Forrest A.R."/>
            <person name="Zavolan M."/>
            <person name="Davis M.J."/>
            <person name="Wilming L.G."/>
            <person name="Aidinis V."/>
            <person name="Allen J.E."/>
            <person name="Ambesi-Impiombato A."/>
            <person name="Apweiler R."/>
            <person name="Aturaliya R.N."/>
            <person name="Bailey T.L."/>
            <person name="Bansal M."/>
            <person name="Baxter L."/>
            <person name="Beisel K.W."/>
            <person name="Bersano T."/>
            <person name="Bono H."/>
            <person name="Chalk A.M."/>
            <person name="Chiu K.P."/>
            <person name="Choudhary V."/>
            <person name="Christoffels A."/>
            <person name="Clutterbuck D.R."/>
            <person name="Crowe M.L."/>
            <person name="Dalla E."/>
            <person name="Dalrymple B.P."/>
            <person name="de Bono B."/>
            <person name="Della Gatta G."/>
            <person name="di Bernardo D."/>
            <person name="Down T."/>
            <person name="Engstrom P."/>
            <person name="Fagiolini M."/>
            <person name="Faulkner G."/>
            <person name="Fletcher C.F."/>
            <person name="Fukushima T."/>
            <person name="Furuno M."/>
            <person name="Futaki S."/>
            <person name="Gariboldi M."/>
            <person name="Georgii-Hemming P."/>
            <person name="Gingeras T.R."/>
            <person name="Gojobori T."/>
            <person name="Green R.E."/>
            <person name="Gustincich S."/>
            <person name="Harbers M."/>
            <person name="Hayashi Y."/>
            <person name="Hensch T.K."/>
            <person name="Hirokawa N."/>
            <person name="Hill D."/>
            <person name="Huminiecki L."/>
            <person name="Iacono M."/>
            <person name="Ikeo K."/>
            <person name="Iwama A."/>
            <person name="Ishikawa T."/>
            <person name="Jakt M."/>
            <person name="Kanapin A."/>
            <person name="Katoh M."/>
            <person name="Kawasawa Y."/>
            <person name="Kelso J."/>
            <person name="Kitamura H."/>
            <person name="Kitano H."/>
            <person name="Kollias G."/>
            <person name="Krishnan S.P."/>
            <person name="Kruger A."/>
            <person name="Kummerfeld S.K."/>
            <person name="Kurochkin I.V."/>
            <person name="Lareau L.F."/>
            <person name="Lazarevic D."/>
            <person name="Lipovich L."/>
            <person name="Liu J."/>
            <person name="Liuni S."/>
            <person name="McWilliam S."/>
            <person name="Madan Babu M."/>
            <person name="Madera M."/>
            <person name="Marchionni L."/>
            <person name="Matsuda H."/>
            <person name="Matsuzawa S."/>
            <person name="Miki H."/>
            <person name="Mignone F."/>
            <person name="Miyake S."/>
            <person name="Morris K."/>
            <person name="Mottagui-Tabar S."/>
            <person name="Mulder N."/>
            <person name="Nakano N."/>
            <person name="Nakauchi H."/>
            <person name="Ng P."/>
            <person name="Nilsson R."/>
            <person name="Nishiguchi S."/>
            <person name="Nishikawa S."/>
            <person name="Nori F."/>
            <person name="Ohara O."/>
            <person name="Okazaki Y."/>
            <person name="Orlando V."/>
            <person name="Pang K.C."/>
            <person name="Pavan W.J."/>
            <person name="Pavesi G."/>
            <person name="Pesole G."/>
            <person name="Petrovsky N."/>
            <person name="Piazza S."/>
            <person name="Reed J."/>
            <person name="Reid J.F."/>
            <person name="Ring B.Z."/>
            <person name="Ringwald M."/>
            <person name="Rost B."/>
            <person name="Ruan Y."/>
            <person name="Salzberg S.L."/>
            <person name="Sandelin A."/>
            <person name="Schneider C."/>
            <person name="Schoenbach C."/>
            <person name="Sekiguchi K."/>
            <person name="Semple C.A."/>
            <person name="Seno S."/>
            <person name="Sessa L."/>
            <person name="Sheng Y."/>
            <person name="Shibata Y."/>
            <person name="Shimada H."/>
            <person name="Shimada K."/>
            <person name="Silva D."/>
            <person name="Sinclair B."/>
            <person name="Sperling S."/>
            <person name="Stupka E."/>
            <person name="Sugiura K."/>
            <person name="Sultana R."/>
            <person name="Takenaka Y."/>
            <person name="Taki K."/>
            <person name="Tammoja K."/>
            <person name="Tan S.L."/>
            <person name="Tang S."/>
            <person name="Taylor M.S."/>
            <person name="Tegner J."/>
            <person name="Teichmann S.A."/>
            <person name="Ueda H.R."/>
            <person name="van Nimwegen E."/>
            <person name="Verardo R."/>
            <person name="Wei C.L."/>
            <person name="Yagi K."/>
            <person name="Yamanishi H."/>
            <person name="Zabarovsky E."/>
            <person name="Zhu S."/>
            <person name="Zimmer A."/>
            <person name="Hide W."/>
            <person name="Bult C."/>
            <person name="Grimmond S.M."/>
            <person name="Teasdale R.D."/>
            <person name="Liu E.T."/>
            <person name="Brusic V."/>
            <person name="Quackenbush J."/>
            <person name="Wahlestedt C."/>
            <person name="Mattick J.S."/>
            <person name="Hume D.A."/>
            <person name="Kai C."/>
            <person name="Sasaki D."/>
            <person name="Tomaru Y."/>
            <person name="Fukuda S."/>
            <person name="Kanamori-Katayama M."/>
            <person name="Suzuki M."/>
            <person name="Aoki J."/>
            <person name="Arakawa T."/>
            <person name="Iida J."/>
            <person name="Imamura K."/>
            <person name="Itoh M."/>
            <person name="Kato T."/>
            <person name="Kawaji H."/>
            <person name="Kawagashira N."/>
            <person name="Kawashima T."/>
            <person name="Kojima M."/>
            <person name="Kondo S."/>
            <person name="Konno H."/>
            <person name="Nakano K."/>
            <person name="Ninomiya N."/>
            <person name="Nishio T."/>
            <person name="Okada M."/>
            <person name="Plessy C."/>
            <person name="Shibata K."/>
            <person name="Shiraki T."/>
            <person name="Suzuki S."/>
            <person name="Tagami M."/>
            <person name="Waki K."/>
            <person name="Watahiki A."/>
            <person name="Okamura-Oho Y."/>
            <person name="Suzuki H."/>
            <person name="Kawai J."/>
            <person name="Hayashizaki Y."/>
        </authorList>
    </citation>
    <scope>NUCLEOTIDE SEQUENCE [LARGE SCALE MRNA]</scope>
    <source>
        <strain>C57BL/6J</strain>
        <tissue>Olfactory bulb</tissue>
        <tissue>Testis</tissue>
    </source>
</reference>
<reference key="2">
    <citation type="journal article" date="2004" name="Genome Res.">
        <title>The status, quality, and expansion of the NIH full-length cDNA project: the Mammalian Gene Collection (MGC).</title>
        <authorList>
            <consortium name="The MGC Project Team"/>
        </authorList>
    </citation>
    <scope>NUCLEOTIDE SEQUENCE [LARGE SCALE MRNA]</scope>
    <source>
        <strain>FVB/N</strain>
        <tissue>Mammary tumor</tissue>
    </source>
</reference>
<reference key="3">
    <citation type="journal article" date="2003" name="DNA Res.">
        <title>Prediction of the coding sequences of mouse homologues of KIAA gene: II. The complete nucleotide sequences of 400 mouse KIAA-homologous cDNAs identified by screening of terminal sequences of cDNA clones randomly sampled from size-fractionated libraries.</title>
        <authorList>
            <person name="Okazaki N."/>
            <person name="Kikuno R."/>
            <person name="Ohara R."/>
            <person name="Inamoto S."/>
            <person name="Aizawa H."/>
            <person name="Yuasa S."/>
            <person name="Nakajima D."/>
            <person name="Nagase T."/>
            <person name="Ohara O."/>
            <person name="Koga H."/>
        </authorList>
    </citation>
    <scope>NUCLEOTIDE SEQUENCE [LARGE SCALE MRNA] OF 265-606</scope>
    <source>
        <tissue>Brain</tissue>
    </source>
</reference>
<reference key="4">
    <citation type="journal article" date="2010" name="Cell">
        <title>A tissue-specific atlas of mouse protein phosphorylation and expression.</title>
        <authorList>
            <person name="Huttlin E.L."/>
            <person name="Jedrychowski M.P."/>
            <person name="Elias J.E."/>
            <person name="Goswami T."/>
            <person name="Rad R."/>
            <person name="Beausoleil S.A."/>
            <person name="Villen J."/>
            <person name="Haas W."/>
            <person name="Sowa M.E."/>
            <person name="Gygi S.P."/>
        </authorList>
    </citation>
    <scope>PHOSPHORYLATION [LARGE SCALE ANALYSIS] AT SER-147</scope>
    <scope>IDENTIFICATION BY MASS SPECTROMETRY [LARGE SCALE ANALYSIS]</scope>
    <source>
        <tissue>Brain</tissue>
        <tissue>Brown adipose tissue</tissue>
        <tissue>Heart</tissue>
        <tissue>Liver</tissue>
        <tissue>Lung</tissue>
        <tissue>Pancreas</tissue>
        <tissue>Spleen</tissue>
    </source>
</reference>
<sequence>MWMTPKRIRMEVDEALVFRPEWTQRYLVVEPAEGDGALCLVCRRLVASTRERDVRRHYEAEHEFYERFVGDEERAALVERLRQGDMSLAAVLTPEERATRAGLGLCRFLALKGRGWGEGDFVHQCMEVLLREVLPDHVGVLEGIDLSPEITRQRILSIDSNLRSQLFNRARDFKAYSLALDDQAFVAYENYLLVFIRGVGRDLEVQEDLLTIINLTHHFSVGALMSAILEALQTAGLSLQRMVGLTTTHTLRMIGENSGLVSYMREKAVSPNCWNVIHYSGFLHLELLSSYDVDINQIINTISEWVVMIKTRGVRRPEFQPLLTESESEHGERVNGRCLNNWLRRGKTLKLIFSLRKEIEAFLVSVGATTVHFSDKQWLCDFGFLVDIMDYLREISEELQISKVFAAAAFERICTFEGKLSSLQRHMEEVNLTDFPAFSIIVDELKQQFKEDQKIFDPDRYQMVISRLQKDFERHFKDLRFIKKDLELFSNPFSFKPEYAPISVRVELTKLQANTDLWNEYRVKDLGQFYAGLSGEAYPIIKGVAYKVASLFDSNQICDKAFAYLTRNQHTLSQPLTDEHLQALFRVATTEMDPRWDDLVRERNDS</sequence>
<gene>
    <name type="primary">Epm2aip1</name>
    <name type="synonym">Kiaa0766</name>
</gene>
<proteinExistence type="evidence at protein level"/>
<evidence type="ECO:0000250" key="1"/>
<evidence type="ECO:0007744" key="2">
    <source>
    </source>
</evidence>
<name>EPMIP_MOUSE</name>
<organism>
    <name type="scientific">Mus musculus</name>
    <name type="common">Mouse</name>
    <dbReference type="NCBI Taxonomy" id="10090"/>
    <lineage>
        <taxon>Eukaryota</taxon>
        <taxon>Metazoa</taxon>
        <taxon>Chordata</taxon>
        <taxon>Craniata</taxon>
        <taxon>Vertebrata</taxon>
        <taxon>Euteleostomi</taxon>
        <taxon>Mammalia</taxon>
        <taxon>Eutheria</taxon>
        <taxon>Euarchontoglires</taxon>
        <taxon>Glires</taxon>
        <taxon>Rodentia</taxon>
        <taxon>Myomorpha</taxon>
        <taxon>Muroidea</taxon>
        <taxon>Muridae</taxon>
        <taxon>Murinae</taxon>
        <taxon>Mus</taxon>
        <taxon>Mus</taxon>
    </lineage>
</organism>